<reference key="1">
    <citation type="journal article" date="1988" name="Science">
        <title>cDNA expression cloning of the IL-1 receptor, a member of the immunoglobulin superfamily.</title>
        <authorList>
            <person name="Sims J.E."/>
            <person name="March C.J."/>
            <person name="Cosman D."/>
            <person name="Widmer M.B."/>
            <person name="McDonald H.R."/>
            <person name="McMahan C.J."/>
            <person name="Grubin C.E."/>
            <person name="Wignall J.M."/>
            <person name="Jackson J.L."/>
            <person name="Call S.M."/>
            <person name="Friend D."/>
            <person name="Alpert A.R."/>
            <person name="Gillis S."/>
            <person name="Urdal D.L."/>
            <person name="Dower S.K."/>
        </authorList>
    </citation>
    <scope>NUCLEOTIDE SEQUENCE [MRNA]</scope>
    <scope>PROTEIN SEQUENCE OF 20-45</scope>
</reference>
<reference key="2">
    <citation type="journal article" date="1991" name="Biochem. Biophys. Res. Commun.">
        <title>Phorbol ester induces phosphorylation of the 80 kilodalton murine interleukin 1 receptor at a single threonine residue.</title>
        <authorList>
            <person name="Bird T.A."/>
            <person name="Woodward A."/>
            <person name="Jackson J.L."/>
            <person name="Dower S.K."/>
            <person name="Sims J.E."/>
        </authorList>
    </citation>
    <scope>PHOSPHORYLATION AT THR-556</scope>
</reference>
<reference key="3">
    <citation type="journal article" date="1995" name="J. Biol. Chem.">
        <title>Molecular cloning and characterization of a second subunit of the interleukin 1 receptor complex.</title>
        <authorList>
            <person name="Greenfeder S.A."/>
            <person name="Nunes P."/>
            <person name="Kwee L."/>
            <person name="Labow M."/>
            <person name="Chizzonite R.A."/>
            <person name="Ju G."/>
        </authorList>
    </citation>
    <scope>INTERACTION WITH IL1RAP</scope>
</reference>
<reference key="4">
    <citation type="journal article" date="2000" name="Nat. Cell Biol.">
        <title>Tollip, a new component of the IL-1R1 pathway, links IRAK to the IL-1 receptor.</title>
        <authorList>
            <person name="Burns K."/>
            <person name="Clatworthy J."/>
            <person name="Martin L."/>
            <person name="Martinon F."/>
            <person name="Plumpton C."/>
            <person name="Maschera B."/>
            <person name="Lewis A."/>
            <person name="Ray K."/>
            <person name="Tschopp J."/>
            <person name="Volpe F."/>
        </authorList>
    </citation>
    <scope>INTERACTION WITH TOLLIP; MYD88 AND IRAK1</scope>
</reference>
<reference key="5">
    <citation type="journal article" date="2012" name="Proc. Natl. Acad. Sci. U.S.A.">
        <title>Interleukin-1R3 mediates interleukin-1-induced potassium current increase through fast activation of Akt kinase.</title>
        <authorList>
            <person name="Qian J."/>
            <person name="Zhu L."/>
            <person name="Li Q."/>
            <person name="Belevych N."/>
            <person name="Chen Q."/>
            <person name="Zhao F."/>
            <person name="Herness S."/>
            <person name="Quan N."/>
        </authorList>
    </citation>
    <scope>FUNCTION (ISOFORM 2)</scope>
    <scope>ALTERNATIVE SPLICING (ISOFORM 2)</scope>
    <scope>TISSUE SPECIFICITY</scope>
</reference>
<reference key="6">
    <citation type="journal article" date="2023" name="Immunity">
        <title>Identification of an IL-1 receptor mutation driving autoinflammation directs IL-1-targeted drug design.</title>
        <authorList>
            <person name="Wang Y."/>
            <person name="Wang J."/>
            <person name="Zheng W."/>
            <person name="Zhang J."/>
            <person name="Wang J."/>
            <person name="Jin T."/>
            <person name="Tao P."/>
            <person name="Wang Y."/>
            <person name="Liu C."/>
            <person name="Huang J."/>
            <person name="Lee P.Y."/>
            <person name="Yu X."/>
            <person name="Zhou Q."/>
        </authorList>
    </citation>
    <scope>MUTAGENESIS OF ARG-134</scope>
</reference>
<reference key="7">
    <citation type="journal article" date="2004" name="Dev. Comp. Immunol.">
        <title>Modelling of fish interleukin-1 and its receptor.</title>
        <authorList>
            <person name="Scapigliati G."/>
            <person name="Costantini S."/>
            <person name="Colonna G."/>
            <person name="Facchiano A."/>
            <person name="Buonocore F."/>
            <person name="Bossu P."/>
            <person name="Cunningham C."/>
            <person name="Holland J.W."/>
            <person name="Secombes C.J."/>
        </authorList>
    </citation>
    <scope>3D-STRUCTURE MODELING OF 25-334</scope>
</reference>
<name>IL1R1_MOUSE</name>
<keyword id="KW-0877">Alternative promoter usage</keyword>
<keyword id="KW-1003">Cell membrane</keyword>
<keyword id="KW-0903">Direct protein sequencing</keyword>
<keyword id="KW-1015">Disulfide bond</keyword>
<keyword id="KW-0325">Glycoprotein</keyword>
<keyword id="KW-0378">Hydrolase</keyword>
<keyword id="KW-0393">Immunoglobulin domain</keyword>
<keyword id="KW-0395">Inflammatory response</keyword>
<keyword id="KW-0472">Membrane</keyword>
<keyword id="KW-0520">NAD</keyword>
<keyword id="KW-0597">Phosphoprotein</keyword>
<keyword id="KW-0675">Receptor</keyword>
<keyword id="KW-1185">Reference proteome</keyword>
<keyword id="KW-0677">Repeat</keyword>
<keyword id="KW-0964">Secreted</keyword>
<keyword id="KW-0732">Signal</keyword>
<keyword id="KW-0812">Transmembrane</keyword>
<keyword id="KW-1133">Transmembrane helix</keyword>
<feature type="signal peptide" evidence="8">
    <location>
        <begin position="1"/>
        <end position="19"/>
    </location>
</feature>
<feature type="chain" id="PRO_0000015436" description="Interleukin-1 receptor type 1, membrane form">
    <location>
        <begin position="20"/>
        <end position="576"/>
    </location>
</feature>
<feature type="chain" id="PRO_0000415345" description="Interleukin-1 receptor type 1, soluble form">
    <location>
        <begin position="20"/>
        <end status="unknown"/>
    </location>
</feature>
<feature type="topological domain" description="Extracellular" evidence="3">
    <location>
        <begin position="20"/>
        <end position="338"/>
    </location>
</feature>
<feature type="transmembrane region" description="Helical" evidence="3">
    <location>
        <begin position="339"/>
        <end position="359"/>
    </location>
</feature>
<feature type="topological domain" description="Cytoplasmic" evidence="3">
    <location>
        <begin position="360"/>
        <end position="576"/>
    </location>
</feature>
<feature type="domain" description="Ig-like C2-type 1">
    <location>
        <begin position="25"/>
        <end position="115"/>
    </location>
</feature>
<feature type="domain" description="Ig-like C2-type 2">
    <location>
        <begin position="121"/>
        <end position="213"/>
    </location>
</feature>
<feature type="domain" description="Ig-like C2-type 3">
    <location>
        <begin position="229"/>
        <end position="329"/>
    </location>
</feature>
<feature type="domain" description="TIR" evidence="5">
    <location>
        <begin position="386"/>
        <end position="541"/>
    </location>
</feature>
<feature type="active site" evidence="5">
    <location>
        <position position="473"/>
    </location>
</feature>
<feature type="modified residue" description="Phosphotyrosine" evidence="2">
    <location>
        <position position="499"/>
    </location>
</feature>
<feature type="modified residue" description="Phosphothreonine; by PKC" evidence="6">
    <location>
        <position position="556"/>
    </location>
</feature>
<feature type="glycosylation site" description="N-linked (GlcNAc...) asparagine" evidence="3">
    <location>
        <position position="63"/>
    </location>
</feature>
<feature type="glycosylation site" description="N-linked (GlcNAc...) asparagine" evidence="3">
    <location>
        <position position="103"/>
    </location>
</feature>
<feature type="glycosylation site" description="N-linked (GlcNAc...) asparagine" evidence="3">
    <location>
        <position position="174"/>
    </location>
</feature>
<feature type="glycosylation site" description="N-linked (GlcNAc...) asparagine" evidence="3">
    <location>
        <position position="236"/>
    </location>
</feature>
<feature type="glycosylation site" description="N-linked (GlcNAc...) asparagine" evidence="3">
    <location>
        <position position="252"/>
    </location>
</feature>
<feature type="glycosylation site" description="N-linked (GlcNAc...) asparagine" evidence="3">
    <location>
        <position position="266"/>
    </location>
</feature>
<feature type="glycosylation site" description="N-linked (GlcNAc...) asparagine" evidence="3">
    <location>
        <position position="300"/>
    </location>
</feature>
<feature type="disulfide bond" evidence="4">
    <location>
        <begin position="25"/>
        <end position="107"/>
    </location>
</feature>
<feature type="disulfide bond" evidence="4">
    <location>
        <begin position="46"/>
        <end position="99"/>
    </location>
</feature>
<feature type="disulfide bond" evidence="4">
    <location>
        <begin position="145"/>
        <end position="199"/>
    </location>
</feature>
<feature type="disulfide bond" evidence="4">
    <location>
        <begin position="251"/>
        <end position="315"/>
    </location>
</feature>
<feature type="splice variant" id="VSP_058170" description="In isoform 2.">
    <location>
        <begin position="1"/>
        <end position="200"/>
    </location>
</feature>
<feature type="mutagenesis site" description="Results in impaired interaction with IL1RN." evidence="9">
    <original>R</original>
    <variation>D</variation>
    <location>
        <position position="134"/>
    </location>
</feature>
<feature type="mutagenesis site" description="Results in impaired interaction with IL1RN." evidence="9">
    <original>R</original>
    <variation>E</variation>
    <location>
        <position position="134"/>
    </location>
</feature>
<feature type="mutagenesis site" description="No effect on interaction with IL1RN." evidence="9">
    <original>R</original>
    <variation>H</variation>
    <location>
        <position position="134"/>
    </location>
</feature>
<feature type="mutagenesis site" description="No effect on interaction with IL1RN." evidence="9">
    <original>R</original>
    <variation>K</variation>
    <location>
        <position position="134"/>
    </location>
</feature>
<accession>P13504</accession>
<gene>
    <name type="primary">Il1r1</name>
    <name type="synonym">Il-1r1</name>
    <name type="synonym">Il1ra</name>
</gene>
<sequence length="576" mass="66698">MENMKVLLGLICLMVPLLSLEIDVCTEYPNQIVLFLSVNEIDIRKCPLTPNKMHGDTIIWYKNDSKTPISADRDSRIHQQNEHLWFVPAKVEDSGYYYCIVRNSTYCLKTKVTVTVLENDPGLCYSTQATFPQRLHIAGDGSLVCPYVSYFKDENNELPEVQWYKNCKPLLLDNVSFFGVKDKLLVRNVAEEHRGDYICRMSYTFRGKQYPVTRVIQFITIDENKRDRPVILSPRNETIEADPGSMIQLICNVTGQFSDLVYWKWNGSEIEWNDPFLAEDYQFVEHPSTKRKYTLITTLNISEVKSQFYRYPFICVVKNTNIFESAHVQLIYPVPDFKNYLIGGFIILTATIVCCVCIYKVFKVDIVLWYRDSCSGFLPSKASDGKTYDAYILYPKTLGEGSFSDLDTFVFKLLPEVLEGQFGYKLFIYGRDDYVGEDTIEVTNENVKKSRRLIIILVRDMGGFSWLGQSSEEQIAIYNALIQEGIKIVLLELEKIQDYEKMPDSIQFIKQKHGVICWSGDFQERPQSAKTRFWKNLRYQMPAQRRSPLSKHRLLTLDPVRDTKEKLPAATHLPLG</sequence>
<dbReference type="EC" id="3.2.2.6" evidence="5"/>
<dbReference type="EMBL" id="M20658">
    <property type="protein sequence ID" value="AAA39279.1"/>
    <property type="molecule type" value="mRNA"/>
</dbReference>
<dbReference type="CCDS" id="CCDS35547.1">
    <molecule id="P13504-1"/>
</dbReference>
<dbReference type="PIR" id="A32604">
    <property type="entry name" value="A32604"/>
</dbReference>
<dbReference type="RefSeq" id="NP_032388.1">
    <molecule id="P13504-1"/>
    <property type="nucleotide sequence ID" value="NM_008362.3"/>
</dbReference>
<dbReference type="RefSeq" id="XP_006495776.1">
    <molecule id="P13504-1"/>
    <property type="nucleotide sequence ID" value="XM_006495713.4"/>
</dbReference>
<dbReference type="SMR" id="P13504"/>
<dbReference type="BioGRID" id="200625">
    <property type="interactions" value="6"/>
</dbReference>
<dbReference type="CORUM" id="P13504"/>
<dbReference type="DIP" id="DIP-40669N"/>
<dbReference type="FunCoup" id="P13504">
    <property type="interactions" value="710"/>
</dbReference>
<dbReference type="IntAct" id="P13504">
    <property type="interactions" value="5"/>
</dbReference>
<dbReference type="STRING" id="10090.ENSMUSP00000027241"/>
<dbReference type="ChEMBL" id="CHEMBL2189148"/>
<dbReference type="GlyCosmos" id="P13504">
    <property type="glycosylation" value="7 sites, No reported glycans"/>
</dbReference>
<dbReference type="GlyGen" id="P13504">
    <property type="glycosylation" value="7 sites, 1 N-linked glycan (1 site)"/>
</dbReference>
<dbReference type="iPTMnet" id="P13504"/>
<dbReference type="PhosphoSitePlus" id="P13504"/>
<dbReference type="PaxDb" id="10090-ENSMUSP00000027241"/>
<dbReference type="ProteomicsDB" id="267122">
    <molecule id="P13504-1"/>
</dbReference>
<dbReference type="ProteomicsDB" id="267123">
    <molecule id="P13504-2"/>
</dbReference>
<dbReference type="Pumba" id="P13504"/>
<dbReference type="Antibodypedia" id="3576">
    <property type="antibodies" value="1007 antibodies from 43 providers"/>
</dbReference>
<dbReference type="DNASU" id="16177"/>
<dbReference type="Ensembl" id="ENSMUST00000027241.11">
    <molecule id="P13504-1"/>
    <property type="protein sequence ID" value="ENSMUSP00000027241.5"/>
    <property type="gene ID" value="ENSMUSG00000026072.13"/>
</dbReference>
<dbReference type="GeneID" id="16177"/>
<dbReference type="KEGG" id="mmu:16177"/>
<dbReference type="UCSC" id="uc007atv.1">
    <molecule id="P13504-1"/>
    <property type="organism name" value="mouse"/>
</dbReference>
<dbReference type="AGR" id="MGI:96545"/>
<dbReference type="CTD" id="3554"/>
<dbReference type="MGI" id="MGI:96545">
    <property type="gene designation" value="Il1r1"/>
</dbReference>
<dbReference type="VEuPathDB" id="HostDB:ENSMUSG00000026072"/>
<dbReference type="eggNOG" id="ENOG502QWEU">
    <property type="taxonomic scope" value="Eukaryota"/>
</dbReference>
<dbReference type="GeneTree" id="ENSGT01090000259985"/>
<dbReference type="InParanoid" id="P13504"/>
<dbReference type="OMA" id="HMPAQRQ"/>
<dbReference type="OrthoDB" id="6132459at2759"/>
<dbReference type="PhylomeDB" id="P13504"/>
<dbReference type="TreeFam" id="TF325519"/>
<dbReference type="Reactome" id="R-MMU-9020702">
    <property type="pathway name" value="Interleukin-1 signaling"/>
</dbReference>
<dbReference type="BioGRID-ORCS" id="16177">
    <property type="hits" value="3 hits in 78 CRISPR screens"/>
</dbReference>
<dbReference type="ChiTaRS" id="Il1r1">
    <property type="organism name" value="mouse"/>
</dbReference>
<dbReference type="PRO" id="PR:P13504"/>
<dbReference type="Proteomes" id="UP000000589">
    <property type="component" value="Chromosome 1"/>
</dbReference>
<dbReference type="RNAct" id="P13504">
    <property type="molecule type" value="protein"/>
</dbReference>
<dbReference type="Bgee" id="ENSMUSG00000026072">
    <property type="expression patterns" value="Expressed in islet of Langerhans and 173 other cell types or tissues"/>
</dbReference>
<dbReference type="ExpressionAtlas" id="P13504">
    <property type="expression patterns" value="baseline and differential"/>
</dbReference>
<dbReference type="GO" id="GO:0009986">
    <property type="term" value="C:cell surface"/>
    <property type="evidence" value="ECO:0000314"/>
    <property type="project" value="UniProtKB"/>
</dbReference>
<dbReference type="GO" id="GO:0009897">
    <property type="term" value="C:external side of plasma membrane"/>
    <property type="evidence" value="ECO:0000314"/>
    <property type="project" value="MGI"/>
</dbReference>
<dbReference type="GO" id="GO:0005576">
    <property type="term" value="C:extracellular region"/>
    <property type="evidence" value="ECO:0007669"/>
    <property type="project" value="UniProtKB-SubCell"/>
</dbReference>
<dbReference type="GO" id="GO:0019966">
    <property type="term" value="F:interleukin-1 binding"/>
    <property type="evidence" value="ECO:0000353"/>
    <property type="project" value="MGI"/>
</dbReference>
<dbReference type="GO" id="GO:0004908">
    <property type="term" value="F:interleukin-1 receptor activity"/>
    <property type="evidence" value="ECO:0000314"/>
    <property type="project" value="UniProtKB"/>
</dbReference>
<dbReference type="GO" id="GO:0004909">
    <property type="term" value="F:interleukin-1, type I, activating receptor activity"/>
    <property type="evidence" value="ECO:0007669"/>
    <property type="project" value="InterPro"/>
</dbReference>
<dbReference type="GO" id="GO:0061809">
    <property type="term" value="F:NAD+ nucleosidase activity, cyclic ADP-ribose generating"/>
    <property type="evidence" value="ECO:0007669"/>
    <property type="project" value="UniProtKB-EC"/>
</dbReference>
<dbReference type="GO" id="GO:0005161">
    <property type="term" value="F:platelet-derived growth factor receptor binding"/>
    <property type="evidence" value="ECO:0007669"/>
    <property type="project" value="Ensembl"/>
</dbReference>
<dbReference type="GO" id="GO:0002020">
    <property type="term" value="F:protease binding"/>
    <property type="evidence" value="ECO:0000353"/>
    <property type="project" value="BHF-UCL"/>
</dbReference>
<dbReference type="GO" id="GO:0019221">
    <property type="term" value="P:cytokine-mediated signaling pathway"/>
    <property type="evidence" value="ECO:0000314"/>
    <property type="project" value="MGI"/>
</dbReference>
<dbReference type="GO" id="GO:0006954">
    <property type="term" value="P:inflammatory response"/>
    <property type="evidence" value="ECO:0007669"/>
    <property type="project" value="UniProtKB-KW"/>
</dbReference>
<dbReference type="GO" id="GO:0070498">
    <property type="term" value="P:interleukin-1-mediated signaling pathway"/>
    <property type="evidence" value="ECO:0000314"/>
    <property type="project" value="UniProtKB"/>
</dbReference>
<dbReference type="GO" id="GO:0043123">
    <property type="term" value="P:positive regulation of canonical NF-kappaB signal transduction"/>
    <property type="evidence" value="ECO:0007669"/>
    <property type="project" value="Ensembl"/>
</dbReference>
<dbReference type="GO" id="GO:2000661">
    <property type="term" value="P:positive regulation of interleukin-1-mediated signaling pathway"/>
    <property type="evidence" value="ECO:0000315"/>
    <property type="project" value="MGI"/>
</dbReference>
<dbReference type="GO" id="GO:2000391">
    <property type="term" value="P:positive regulation of neutrophil extravasation"/>
    <property type="evidence" value="ECO:0000315"/>
    <property type="project" value="MGI"/>
</dbReference>
<dbReference type="GO" id="GO:0051897">
    <property type="term" value="P:positive regulation of phosphatidylinositol 3-kinase/protein kinase B signal transduction"/>
    <property type="evidence" value="ECO:0007669"/>
    <property type="project" value="Ensembl"/>
</dbReference>
<dbReference type="GO" id="GO:0010641">
    <property type="term" value="P:positive regulation of platelet-derived growth factor receptor signaling pathway"/>
    <property type="evidence" value="ECO:0007669"/>
    <property type="project" value="Ensembl"/>
</dbReference>
<dbReference type="GO" id="GO:2000556">
    <property type="term" value="P:positive regulation of T-helper 1 cell cytokine production"/>
    <property type="evidence" value="ECO:0000250"/>
    <property type="project" value="UniProtKB"/>
</dbReference>
<dbReference type="GO" id="GO:0032729">
    <property type="term" value="P:positive regulation of type II interferon production"/>
    <property type="evidence" value="ECO:0000250"/>
    <property type="project" value="UniProtKB"/>
</dbReference>
<dbReference type="GO" id="GO:0050727">
    <property type="term" value="P:regulation of inflammatory response"/>
    <property type="evidence" value="ECO:0000315"/>
    <property type="project" value="MGI"/>
</dbReference>
<dbReference type="FunFam" id="3.40.50.10140:FF:000002">
    <property type="entry name" value="Interleukin 1 receptor accessory protein"/>
    <property type="match status" value="1"/>
</dbReference>
<dbReference type="FunFam" id="2.60.40.10:FF:001064">
    <property type="entry name" value="Interleukin 1 receptor, type I"/>
    <property type="match status" value="1"/>
</dbReference>
<dbReference type="FunFam" id="2.60.40.10:FF:000188">
    <property type="entry name" value="Interleukin-1 receptor accessory protein-like 1"/>
    <property type="match status" value="1"/>
</dbReference>
<dbReference type="FunFam" id="2.60.40.10:FF:000284">
    <property type="entry name" value="interleukin-1 receptor accessory protein-like 1"/>
    <property type="match status" value="1"/>
</dbReference>
<dbReference type="Gene3D" id="2.60.40.10">
    <property type="entry name" value="Immunoglobulins"/>
    <property type="match status" value="3"/>
</dbReference>
<dbReference type="Gene3D" id="3.40.50.10140">
    <property type="entry name" value="Toll/interleukin-1 receptor homology (TIR) domain"/>
    <property type="match status" value="1"/>
</dbReference>
<dbReference type="InterPro" id="IPR007110">
    <property type="entry name" value="Ig-like_dom"/>
</dbReference>
<dbReference type="InterPro" id="IPR036179">
    <property type="entry name" value="Ig-like_dom_sf"/>
</dbReference>
<dbReference type="InterPro" id="IPR013783">
    <property type="entry name" value="Ig-like_fold"/>
</dbReference>
<dbReference type="InterPro" id="IPR013098">
    <property type="entry name" value="Ig_I-set"/>
</dbReference>
<dbReference type="InterPro" id="IPR003599">
    <property type="entry name" value="Ig_sub"/>
</dbReference>
<dbReference type="InterPro" id="IPR015621">
    <property type="entry name" value="IL-1_rcpt_fam"/>
</dbReference>
<dbReference type="InterPro" id="IPR004076">
    <property type="entry name" value="IL-1_rcpt_I-typ"/>
</dbReference>
<dbReference type="InterPro" id="IPR004074">
    <property type="entry name" value="IL-1_rcpt_I/II-typ"/>
</dbReference>
<dbReference type="InterPro" id="IPR000157">
    <property type="entry name" value="TIR_dom"/>
</dbReference>
<dbReference type="InterPro" id="IPR035897">
    <property type="entry name" value="Toll_tir_struct_dom_sf"/>
</dbReference>
<dbReference type="PANTHER" id="PTHR11890">
    <property type="entry name" value="INTERLEUKIN-1 RECEPTOR FAMILY MEMBER"/>
    <property type="match status" value="1"/>
</dbReference>
<dbReference type="PANTHER" id="PTHR11890:SF26">
    <property type="entry name" value="INTERLEUKIN-1 RECEPTOR TYPE 1"/>
    <property type="match status" value="1"/>
</dbReference>
<dbReference type="Pfam" id="PF07679">
    <property type="entry name" value="I-set"/>
    <property type="match status" value="1"/>
</dbReference>
<dbReference type="Pfam" id="PF13895">
    <property type="entry name" value="Ig_2"/>
    <property type="match status" value="1"/>
</dbReference>
<dbReference type="Pfam" id="PF01582">
    <property type="entry name" value="TIR"/>
    <property type="match status" value="1"/>
</dbReference>
<dbReference type="PRINTS" id="PR01538">
    <property type="entry name" value="INTRLEUKN1R1"/>
</dbReference>
<dbReference type="PRINTS" id="PR01536">
    <property type="entry name" value="INTRLKN1R12F"/>
</dbReference>
<dbReference type="PRINTS" id="PR01537">
    <property type="entry name" value="INTRLKN1R1F"/>
</dbReference>
<dbReference type="SMART" id="SM00409">
    <property type="entry name" value="IG"/>
    <property type="match status" value="3"/>
</dbReference>
<dbReference type="SMART" id="SM00255">
    <property type="entry name" value="TIR"/>
    <property type="match status" value="1"/>
</dbReference>
<dbReference type="SUPFAM" id="SSF48726">
    <property type="entry name" value="Immunoglobulin"/>
    <property type="match status" value="3"/>
</dbReference>
<dbReference type="SUPFAM" id="SSF52200">
    <property type="entry name" value="Toll/Interleukin receptor TIR domain"/>
    <property type="match status" value="1"/>
</dbReference>
<dbReference type="PROSITE" id="PS50835">
    <property type="entry name" value="IG_LIKE"/>
    <property type="match status" value="3"/>
</dbReference>
<dbReference type="PROSITE" id="PS50104">
    <property type="entry name" value="TIR"/>
    <property type="match status" value="1"/>
</dbReference>
<organism>
    <name type="scientific">Mus musculus</name>
    <name type="common">Mouse</name>
    <dbReference type="NCBI Taxonomy" id="10090"/>
    <lineage>
        <taxon>Eukaryota</taxon>
        <taxon>Metazoa</taxon>
        <taxon>Chordata</taxon>
        <taxon>Craniata</taxon>
        <taxon>Vertebrata</taxon>
        <taxon>Euteleostomi</taxon>
        <taxon>Mammalia</taxon>
        <taxon>Eutheria</taxon>
        <taxon>Euarchontoglires</taxon>
        <taxon>Glires</taxon>
        <taxon>Rodentia</taxon>
        <taxon>Myomorpha</taxon>
        <taxon>Muroidea</taxon>
        <taxon>Muridae</taxon>
        <taxon>Murinae</taxon>
        <taxon>Mus</taxon>
        <taxon>Mus</taxon>
    </lineage>
</organism>
<evidence type="ECO:0000250" key="1"/>
<evidence type="ECO:0000250" key="2">
    <source>
        <dbReference type="UniProtKB" id="P14778"/>
    </source>
</evidence>
<evidence type="ECO:0000255" key="3"/>
<evidence type="ECO:0000255" key="4">
    <source>
        <dbReference type="PROSITE-ProRule" id="PRU00114"/>
    </source>
</evidence>
<evidence type="ECO:0000255" key="5">
    <source>
        <dbReference type="PROSITE-ProRule" id="PRU00204"/>
    </source>
</evidence>
<evidence type="ECO:0000269" key="6">
    <source>
    </source>
</evidence>
<evidence type="ECO:0000269" key="7">
    <source>
    </source>
</evidence>
<evidence type="ECO:0000269" key="8">
    <source>
    </source>
</evidence>
<evidence type="ECO:0000269" key="9">
    <source>
    </source>
</evidence>
<evidence type="ECO:0000305" key="10"/>
<proteinExistence type="evidence at protein level"/>
<protein>
    <recommendedName>
        <fullName>Interleukin-1 receptor type 1</fullName>
        <shortName>IL-1R-1</shortName>
        <shortName>IL-1RT-1</shortName>
        <shortName>IL-1RT1</shortName>
        <ecNumber evidence="5">3.2.2.6</ecNumber>
    </recommendedName>
    <alternativeName>
        <fullName>CD121 antigen-like family member A</fullName>
    </alternativeName>
    <alternativeName>
        <fullName>Interleukin-1 receptor alpha</fullName>
        <shortName>IL-1R-alpha</shortName>
    </alternativeName>
    <alternativeName>
        <fullName>Interleukin-1 receptor type I</fullName>
    </alternativeName>
    <alternativeName>
        <fullName>p80</fullName>
    </alternativeName>
    <cdAntigenName>CD121a</cdAntigenName>
    <component>
        <recommendedName>
            <fullName>Interleukin-1 receptor type 1, membrane form</fullName>
            <shortName>mIL-1R1</shortName>
            <shortName>mIL-1RI</shortName>
        </recommendedName>
    </component>
    <component>
        <recommendedName>
            <fullName>Interleukin-1 receptor type 1, soluble form</fullName>
            <shortName>sIL-1R1</shortName>
            <shortName>sIL-1RI</shortName>
        </recommendedName>
    </component>
</protein>
<comment type="function">
    <text evidence="2">Receptor for IL1A, IL1B and IL1RN. After binding to interleukin-1 associates with the coreceptor IL1RAP to form the high affinity interleukin-1 receptor complex which mediates interleukin-1-dependent activation of NF-kappa-B, MAPK and other pathways. Signaling involves the recruitment of adapter molecules such as TOLLIP, MYD88, and IRAK1 or IRAK2 via the respective TIR domains of the receptor/coreceptor subunits. Binds ligands with comparable affinity and binding of antagonist IL1RN prevents association with IL1RAP to form a signaling complex. Involved in IL1B-mediated costimulation of IFNG production from T-helper 1 (Th1) cells (By similarity).</text>
</comment>
<comment type="function">
    <molecule>Isoform 2</molecule>
    <text evidence="7">Unable to mediate canonical IL-1 signaling. Cooperates with IL1RAP isoform 3 to mediate IL1B-induced neuronal activity including IL1B-potentiated NMDA-induced calcium influx mediated by Akt kinase activation.</text>
</comment>
<comment type="catalytic activity">
    <reaction evidence="5">
        <text>NAD(+) + H2O = ADP-D-ribose + nicotinamide + H(+)</text>
        <dbReference type="Rhea" id="RHEA:16301"/>
        <dbReference type="ChEBI" id="CHEBI:15377"/>
        <dbReference type="ChEBI" id="CHEBI:15378"/>
        <dbReference type="ChEBI" id="CHEBI:17154"/>
        <dbReference type="ChEBI" id="CHEBI:57540"/>
        <dbReference type="ChEBI" id="CHEBI:57967"/>
        <dbReference type="EC" id="3.2.2.6"/>
    </reaction>
    <physiologicalReaction direction="left-to-right" evidence="5">
        <dbReference type="Rhea" id="RHEA:16302"/>
    </physiologicalReaction>
</comment>
<comment type="subunit">
    <text evidence="2">The interleukin-1 receptor complex is a heterodimer of IL1R1 and IL1RAP. Interacts with PIK3R1. Interacts with IL1A (By similarity).</text>
</comment>
<comment type="interaction">
    <interactant intactId="EBI-1782675">
        <id>P13504</id>
    </interactant>
    <interactant intactId="EBI-525108">
        <id>P22366</id>
        <label>Myd88</label>
    </interactant>
    <organismsDiffer>false</organismsDiffer>
    <experiments>2</experiments>
</comment>
<comment type="subcellular location">
    <subcellularLocation>
        <location>Membrane</location>
        <topology>Single-pass type I membrane protein</topology>
    </subcellularLocation>
    <subcellularLocation>
        <location evidence="10">Cell membrane</location>
    </subcellularLocation>
    <subcellularLocation>
        <location evidence="1">Secreted</location>
    </subcellularLocation>
</comment>
<comment type="alternative products">
    <event type="alternative promoter"/>
    <isoform>
        <id>P13504-1</id>
        <name>1</name>
        <sequence type="displayed"/>
    </isoform>
    <isoform>
        <id>P13504-2</id>
        <name>2</name>
        <name>IL-1R3</name>
        <sequence type="described" ref="VSP_058170"/>
    </isoform>
</comment>
<comment type="tissue specificity">
    <text evidence="7">Isoform 2 is expressed in various brain tissues.</text>
</comment>
<comment type="domain">
    <text evidence="5">The TIR domain mediates NAD(+) hydrolase (NADase) activity. Self-association of TIR domains is required for NADase activity.</text>
</comment>
<comment type="PTM">
    <text evidence="1">A soluble form (sIL1R1) is probably produced by proteolytic cleavage at the cell surface (shedding).</text>
</comment>
<comment type="PTM">
    <text evidence="1">Rapidly phosphorylated on Tyr-499 in response to IL-1, which creates a SH2 binding site for the PI 3-kinase regulatory subunit PIK3R1.</text>
</comment>
<comment type="similarity">
    <text evidence="10">Belongs to the interleukin-1 receptor family.</text>
</comment>